<keyword id="KW-0143">Chaperone</keyword>
<keyword id="KW-0963">Cytoplasm</keyword>
<keyword id="KW-0235">DNA replication</keyword>
<keyword id="KW-0479">Metal-binding</keyword>
<keyword id="KW-0677">Repeat</keyword>
<keyword id="KW-0346">Stress response</keyword>
<keyword id="KW-0862">Zinc</keyword>
<keyword id="KW-0863">Zinc-finger</keyword>
<organism>
    <name type="scientific">Aeromonas salmonicida (strain A449)</name>
    <dbReference type="NCBI Taxonomy" id="382245"/>
    <lineage>
        <taxon>Bacteria</taxon>
        <taxon>Pseudomonadati</taxon>
        <taxon>Pseudomonadota</taxon>
        <taxon>Gammaproteobacteria</taxon>
        <taxon>Aeromonadales</taxon>
        <taxon>Aeromonadaceae</taxon>
        <taxon>Aeromonas</taxon>
    </lineage>
</organism>
<feature type="chain" id="PRO_1000085137" description="Chaperone protein DnaJ">
    <location>
        <begin position="1"/>
        <end position="380"/>
    </location>
</feature>
<feature type="domain" description="J" evidence="1">
    <location>
        <begin position="5"/>
        <end position="70"/>
    </location>
</feature>
<feature type="repeat" description="CXXCXGXG motif">
    <location>
        <begin position="148"/>
        <end position="155"/>
    </location>
</feature>
<feature type="repeat" description="CXXCXGXG motif">
    <location>
        <begin position="165"/>
        <end position="172"/>
    </location>
</feature>
<feature type="repeat" description="CXXCXGXG motif">
    <location>
        <begin position="187"/>
        <end position="194"/>
    </location>
</feature>
<feature type="repeat" description="CXXCXGXG motif">
    <location>
        <begin position="201"/>
        <end position="208"/>
    </location>
</feature>
<feature type="zinc finger region" description="CR-type" evidence="1">
    <location>
        <begin position="135"/>
        <end position="213"/>
    </location>
</feature>
<feature type="binding site" evidence="1">
    <location>
        <position position="148"/>
    </location>
    <ligand>
        <name>Zn(2+)</name>
        <dbReference type="ChEBI" id="CHEBI:29105"/>
        <label>1</label>
    </ligand>
</feature>
<feature type="binding site" evidence="1">
    <location>
        <position position="151"/>
    </location>
    <ligand>
        <name>Zn(2+)</name>
        <dbReference type="ChEBI" id="CHEBI:29105"/>
        <label>1</label>
    </ligand>
</feature>
<feature type="binding site" evidence="1">
    <location>
        <position position="165"/>
    </location>
    <ligand>
        <name>Zn(2+)</name>
        <dbReference type="ChEBI" id="CHEBI:29105"/>
        <label>2</label>
    </ligand>
</feature>
<feature type="binding site" evidence="1">
    <location>
        <position position="168"/>
    </location>
    <ligand>
        <name>Zn(2+)</name>
        <dbReference type="ChEBI" id="CHEBI:29105"/>
        <label>2</label>
    </ligand>
</feature>
<feature type="binding site" evidence="1">
    <location>
        <position position="187"/>
    </location>
    <ligand>
        <name>Zn(2+)</name>
        <dbReference type="ChEBI" id="CHEBI:29105"/>
        <label>2</label>
    </ligand>
</feature>
<feature type="binding site" evidence="1">
    <location>
        <position position="190"/>
    </location>
    <ligand>
        <name>Zn(2+)</name>
        <dbReference type="ChEBI" id="CHEBI:29105"/>
        <label>2</label>
    </ligand>
</feature>
<feature type="binding site" evidence="1">
    <location>
        <position position="201"/>
    </location>
    <ligand>
        <name>Zn(2+)</name>
        <dbReference type="ChEBI" id="CHEBI:29105"/>
        <label>1</label>
    </ligand>
</feature>
<feature type="binding site" evidence="1">
    <location>
        <position position="204"/>
    </location>
    <ligand>
        <name>Zn(2+)</name>
        <dbReference type="ChEBI" id="CHEBI:29105"/>
        <label>1</label>
    </ligand>
</feature>
<gene>
    <name evidence="1" type="primary">dnaJ</name>
    <name type="ordered locus">ASA_2995</name>
</gene>
<reference key="1">
    <citation type="journal article" date="2008" name="BMC Genomics">
        <title>The genome of Aeromonas salmonicida subsp. salmonicida A449: insights into the evolution of a fish pathogen.</title>
        <authorList>
            <person name="Reith M.E."/>
            <person name="Singh R.K."/>
            <person name="Curtis B."/>
            <person name="Boyd J.M."/>
            <person name="Bouevitch A."/>
            <person name="Kimball J."/>
            <person name="Munholland J."/>
            <person name="Murphy C."/>
            <person name="Sarty D."/>
            <person name="Williams J."/>
            <person name="Nash J.H."/>
            <person name="Johnson S.C."/>
            <person name="Brown L.L."/>
        </authorList>
    </citation>
    <scope>NUCLEOTIDE SEQUENCE [LARGE SCALE GENOMIC DNA]</scope>
    <source>
        <strain>A449</strain>
    </source>
</reference>
<comment type="function">
    <text evidence="1">Participates actively in the response to hyperosmotic and heat shock by preventing the aggregation of stress-denatured proteins and by disaggregating proteins, also in an autonomous, DnaK-independent fashion. Unfolded proteins bind initially to DnaJ; upon interaction with the DnaJ-bound protein, DnaK hydrolyzes its bound ATP, resulting in the formation of a stable complex. GrpE releases ADP from DnaK; ATP binding to DnaK triggers the release of the substrate protein, thus completing the reaction cycle. Several rounds of ATP-dependent interactions between DnaJ, DnaK and GrpE are required for fully efficient folding. Also involved, together with DnaK and GrpE, in the DNA replication of plasmids through activation of initiation proteins.</text>
</comment>
<comment type="cofactor">
    <cofactor evidence="1">
        <name>Zn(2+)</name>
        <dbReference type="ChEBI" id="CHEBI:29105"/>
    </cofactor>
    <text evidence="1">Binds 2 Zn(2+) ions per monomer.</text>
</comment>
<comment type="subunit">
    <text evidence="1">Homodimer.</text>
</comment>
<comment type="subcellular location">
    <subcellularLocation>
        <location evidence="1">Cytoplasm</location>
    </subcellularLocation>
</comment>
<comment type="domain">
    <text evidence="1">The J domain is necessary and sufficient to stimulate DnaK ATPase activity. Zinc center 1 plays an important role in the autonomous, DnaK-independent chaperone activity of DnaJ. Zinc center 2 is essential for interaction with DnaK and for DnaJ activity.</text>
</comment>
<comment type="similarity">
    <text evidence="1">Belongs to the DnaJ family.</text>
</comment>
<accession>A4SQ24</accession>
<proteinExistence type="inferred from homology"/>
<dbReference type="EMBL" id="CP000644">
    <property type="protein sequence ID" value="ABO90996.1"/>
    <property type="molecule type" value="Genomic_DNA"/>
</dbReference>
<dbReference type="RefSeq" id="WP_011898956.1">
    <property type="nucleotide sequence ID" value="NC_009348.1"/>
</dbReference>
<dbReference type="SMR" id="A4SQ24"/>
<dbReference type="STRING" id="29491.GCA_000820065_02236"/>
<dbReference type="KEGG" id="asa:ASA_2995"/>
<dbReference type="PATRIC" id="fig|382245.13.peg.2980"/>
<dbReference type="eggNOG" id="COG0484">
    <property type="taxonomic scope" value="Bacteria"/>
</dbReference>
<dbReference type="HOGENOM" id="CLU_017633_0_7_6"/>
<dbReference type="Proteomes" id="UP000000225">
    <property type="component" value="Chromosome"/>
</dbReference>
<dbReference type="GO" id="GO:0005737">
    <property type="term" value="C:cytoplasm"/>
    <property type="evidence" value="ECO:0007669"/>
    <property type="project" value="UniProtKB-SubCell"/>
</dbReference>
<dbReference type="GO" id="GO:0005524">
    <property type="term" value="F:ATP binding"/>
    <property type="evidence" value="ECO:0007669"/>
    <property type="project" value="InterPro"/>
</dbReference>
<dbReference type="GO" id="GO:0031072">
    <property type="term" value="F:heat shock protein binding"/>
    <property type="evidence" value="ECO:0007669"/>
    <property type="project" value="InterPro"/>
</dbReference>
<dbReference type="GO" id="GO:0051082">
    <property type="term" value="F:unfolded protein binding"/>
    <property type="evidence" value="ECO:0007669"/>
    <property type="project" value="UniProtKB-UniRule"/>
</dbReference>
<dbReference type="GO" id="GO:0008270">
    <property type="term" value="F:zinc ion binding"/>
    <property type="evidence" value="ECO:0007669"/>
    <property type="project" value="UniProtKB-UniRule"/>
</dbReference>
<dbReference type="GO" id="GO:0051085">
    <property type="term" value="P:chaperone cofactor-dependent protein refolding"/>
    <property type="evidence" value="ECO:0007669"/>
    <property type="project" value="TreeGrafter"/>
</dbReference>
<dbReference type="GO" id="GO:0006260">
    <property type="term" value="P:DNA replication"/>
    <property type="evidence" value="ECO:0007669"/>
    <property type="project" value="UniProtKB-KW"/>
</dbReference>
<dbReference type="GO" id="GO:0042026">
    <property type="term" value="P:protein refolding"/>
    <property type="evidence" value="ECO:0007669"/>
    <property type="project" value="TreeGrafter"/>
</dbReference>
<dbReference type="GO" id="GO:0009408">
    <property type="term" value="P:response to heat"/>
    <property type="evidence" value="ECO:0007669"/>
    <property type="project" value="InterPro"/>
</dbReference>
<dbReference type="CDD" id="cd06257">
    <property type="entry name" value="DnaJ"/>
    <property type="match status" value="1"/>
</dbReference>
<dbReference type="CDD" id="cd10747">
    <property type="entry name" value="DnaJ_C"/>
    <property type="match status" value="1"/>
</dbReference>
<dbReference type="CDD" id="cd10719">
    <property type="entry name" value="DnaJ_zf"/>
    <property type="match status" value="1"/>
</dbReference>
<dbReference type="FunFam" id="1.10.287.110:FF:000034">
    <property type="entry name" value="Chaperone protein DnaJ"/>
    <property type="match status" value="1"/>
</dbReference>
<dbReference type="FunFam" id="2.10.230.10:FF:000002">
    <property type="entry name" value="Molecular chaperone DnaJ"/>
    <property type="match status" value="1"/>
</dbReference>
<dbReference type="FunFam" id="2.60.260.20:FF:000004">
    <property type="entry name" value="Molecular chaperone DnaJ"/>
    <property type="match status" value="1"/>
</dbReference>
<dbReference type="Gene3D" id="1.10.287.110">
    <property type="entry name" value="DnaJ domain"/>
    <property type="match status" value="1"/>
</dbReference>
<dbReference type="Gene3D" id="2.10.230.10">
    <property type="entry name" value="Heat shock protein DnaJ, cysteine-rich domain"/>
    <property type="match status" value="1"/>
</dbReference>
<dbReference type="Gene3D" id="2.60.260.20">
    <property type="entry name" value="Urease metallochaperone UreE, N-terminal domain"/>
    <property type="match status" value="2"/>
</dbReference>
<dbReference type="HAMAP" id="MF_01152">
    <property type="entry name" value="DnaJ"/>
    <property type="match status" value="1"/>
</dbReference>
<dbReference type="InterPro" id="IPR012724">
    <property type="entry name" value="DnaJ"/>
</dbReference>
<dbReference type="InterPro" id="IPR002939">
    <property type="entry name" value="DnaJ_C"/>
</dbReference>
<dbReference type="InterPro" id="IPR001623">
    <property type="entry name" value="DnaJ_domain"/>
</dbReference>
<dbReference type="InterPro" id="IPR018253">
    <property type="entry name" value="DnaJ_domain_CS"/>
</dbReference>
<dbReference type="InterPro" id="IPR008971">
    <property type="entry name" value="HSP40/DnaJ_pept-bd"/>
</dbReference>
<dbReference type="InterPro" id="IPR001305">
    <property type="entry name" value="HSP_DnaJ_Cys-rich_dom"/>
</dbReference>
<dbReference type="InterPro" id="IPR036410">
    <property type="entry name" value="HSP_DnaJ_Cys-rich_dom_sf"/>
</dbReference>
<dbReference type="InterPro" id="IPR036869">
    <property type="entry name" value="J_dom_sf"/>
</dbReference>
<dbReference type="NCBIfam" id="TIGR02349">
    <property type="entry name" value="DnaJ_bact"/>
    <property type="match status" value="1"/>
</dbReference>
<dbReference type="NCBIfam" id="NF008035">
    <property type="entry name" value="PRK10767.1"/>
    <property type="match status" value="1"/>
</dbReference>
<dbReference type="PANTHER" id="PTHR43096:SF48">
    <property type="entry name" value="CHAPERONE PROTEIN DNAJ"/>
    <property type="match status" value="1"/>
</dbReference>
<dbReference type="PANTHER" id="PTHR43096">
    <property type="entry name" value="DNAJ HOMOLOG 1, MITOCHONDRIAL-RELATED"/>
    <property type="match status" value="1"/>
</dbReference>
<dbReference type="Pfam" id="PF00226">
    <property type="entry name" value="DnaJ"/>
    <property type="match status" value="1"/>
</dbReference>
<dbReference type="Pfam" id="PF01556">
    <property type="entry name" value="DnaJ_C"/>
    <property type="match status" value="1"/>
</dbReference>
<dbReference type="Pfam" id="PF00684">
    <property type="entry name" value="DnaJ_CXXCXGXG"/>
    <property type="match status" value="1"/>
</dbReference>
<dbReference type="PRINTS" id="PR00625">
    <property type="entry name" value="JDOMAIN"/>
</dbReference>
<dbReference type="SMART" id="SM00271">
    <property type="entry name" value="DnaJ"/>
    <property type="match status" value="1"/>
</dbReference>
<dbReference type="SUPFAM" id="SSF46565">
    <property type="entry name" value="Chaperone J-domain"/>
    <property type="match status" value="1"/>
</dbReference>
<dbReference type="SUPFAM" id="SSF57938">
    <property type="entry name" value="DnaJ/Hsp40 cysteine-rich domain"/>
    <property type="match status" value="1"/>
</dbReference>
<dbReference type="SUPFAM" id="SSF49493">
    <property type="entry name" value="HSP40/DnaJ peptide-binding domain"/>
    <property type="match status" value="2"/>
</dbReference>
<dbReference type="PROSITE" id="PS00636">
    <property type="entry name" value="DNAJ_1"/>
    <property type="match status" value="1"/>
</dbReference>
<dbReference type="PROSITE" id="PS50076">
    <property type="entry name" value="DNAJ_2"/>
    <property type="match status" value="1"/>
</dbReference>
<dbReference type="PROSITE" id="PS51188">
    <property type="entry name" value="ZF_CR"/>
    <property type="match status" value="1"/>
</dbReference>
<name>DNAJ_AERS4</name>
<evidence type="ECO:0000255" key="1">
    <source>
        <dbReference type="HAMAP-Rule" id="MF_01152"/>
    </source>
</evidence>
<sequence>MSKRDFYEVLGVSKGADEREIKKAYKPLAMKFHPDRNQGDAASEEKFKEVKEAYEILTDENLRARYDQYGHAGVDQSQGGGGHGGFGGGADFGDAFGDIFGDIFGGRNGGGRRGPARGSDLRYTMELTLEEAVRGVSKEIKVPSLVHCEVCNGSGAHTGSTAQTCPTCHGAGQVQMRQGFFAVQQACPHCHGRGKIIKDPCRKCHGEGRYQKTKTLSVKIPAGVDTGDRIRLSGEGEAGEAGAPAGDLYVQVHVKEHEIFVRDGNNLYCEVPISFTAAALGGEIEVPTLDGRVKLKVTPETQTGKMFRMRGKGVKSVRSGQVGDLMCKVVIETPVKLTESQKELLRQLDESFSGAAAKTHKPRSEGFFEGVKRFFDDLTR</sequence>
<protein>
    <recommendedName>
        <fullName evidence="1">Chaperone protein DnaJ</fullName>
    </recommendedName>
</protein>